<comment type="function">
    <text evidence="3">Probable transcription regulator that acts as a developmental regulator by promoting cell growth in response to continuous red (cR), far-red (cFR) and blue (cB) light in a phytochrome-dependent manner, at least during seedling development.</text>
</comment>
<comment type="subcellular location">
    <subcellularLocation>
        <location evidence="3">Nucleus</location>
    </subcellularLocation>
</comment>
<comment type="tissue specificity">
    <text evidence="3">Expressed in hypocotyls, shoot apices and lateral root primordia and, weakly, in vascular tissues.</text>
</comment>
<comment type="similarity">
    <text evidence="4">Belongs to the plant homeotic and developmental regulators ALOG protein family.</text>
</comment>
<proteinExistence type="evidence at protein level"/>
<dbReference type="EMBL" id="AY319947">
    <property type="protein sequence ID" value="AAQ82901.1"/>
    <property type="molecule type" value="mRNA"/>
</dbReference>
<dbReference type="EMBL" id="AF262039">
    <property type="status" value="NOT_ANNOTATED_CDS"/>
    <property type="molecule type" value="Genomic_DNA"/>
</dbReference>
<dbReference type="EMBL" id="CP002688">
    <property type="protein sequence ID" value="AED93805.1"/>
    <property type="molecule type" value="Genomic_DNA"/>
</dbReference>
<dbReference type="EMBL" id="BT010821">
    <property type="protein sequence ID" value="AAR24188.1"/>
    <property type="molecule type" value="mRNA"/>
</dbReference>
<dbReference type="EMBL" id="BT011304">
    <property type="protein sequence ID" value="AAR92340.1"/>
    <property type="molecule type" value="mRNA"/>
</dbReference>
<dbReference type="RefSeq" id="NP_198201.1">
    <property type="nucleotide sequence ID" value="NM_122732.3"/>
</dbReference>
<dbReference type="SMR" id="Q6NNI3"/>
<dbReference type="BioGRID" id="18214">
    <property type="interactions" value="2"/>
</dbReference>
<dbReference type="FunCoup" id="Q6NNI3">
    <property type="interactions" value="1"/>
</dbReference>
<dbReference type="IntAct" id="Q6NNI3">
    <property type="interactions" value="2"/>
</dbReference>
<dbReference type="STRING" id="3702.Q6NNI3"/>
<dbReference type="PaxDb" id="3702-AT5G28490.1"/>
<dbReference type="ProteomicsDB" id="238593"/>
<dbReference type="EnsemblPlants" id="AT5G28490.1">
    <property type="protein sequence ID" value="AT5G28490.1"/>
    <property type="gene ID" value="AT5G28490"/>
</dbReference>
<dbReference type="GeneID" id="832941"/>
<dbReference type="Gramene" id="AT5G28490.1">
    <property type="protein sequence ID" value="AT5G28490.1"/>
    <property type="gene ID" value="AT5G28490"/>
</dbReference>
<dbReference type="KEGG" id="ath:AT5G28490"/>
<dbReference type="Araport" id="AT5G28490"/>
<dbReference type="TAIR" id="AT5G28490">
    <property type="gene designation" value="LSH1"/>
</dbReference>
<dbReference type="eggNOG" id="ENOG502QSQJ">
    <property type="taxonomic scope" value="Eukaryota"/>
</dbReference>
<dbReference type="HOGENOM" id="CLU_071168_1_1_1"/>
<dbReference type="InParanoid" id="Q6NNI3"/>
<dbReference type="OMA" id="LISHQPN"/>
<dbReference type="OrthoDB" id="1906822at2759"/>
<dbReference type="PhylomeDB" id="Q6NNI3"/>
<dbReference type="PRO" id="PR:Q6NNI3"/>
<dbReference type="Proteomes" id="UP000006548">
    <property type="component" value="Chromosome 5"/>
</dbReference>
<dbReference type="ExpressionAtlas" id="Q6NNI3">
    <property type="expression patterns" value="baseline and differential"/>
</dbReference>
<dbReference type="GO" id="GO:0005634">
    <property type="term" value="C:nucleus"/>
    <property type="evidence" value="ECO:0000314"/>
    <property type="project" value="TAIR"/>
</dbReference>
<dbReference type="GO" id="GO:0003677">
    <property type="term" value="F:DNA binding"/>
    <property type="evidence" value="ECO:0007669"/>
    <property type="project" value="UniProtKB-KW"/>
</dbReference>
<dbReference type="GO" id="GO:0009299">
    <property type="term" value="P:mRNA transcription"/>
    <property type="evidence" value="ECO:0000250"/>
    <property type="project" value="UniProtKB"/>
</dbReference>
<dbReference type="GO" id="GO:0090698">
    <property type="term" value="P:post-embryonic plant morphogenesis"/>
    <property type="evidence" value="ECO:0000250"/>
    <property type="project" value="UniProtKB"/>
</dbReference>
<dbReference type="GO" id="GO:0009637">
    <property type="term" value="P:response to blue light"/>
    <property type="evidence" value="ECO:0000316"/>
    <property type="project" value="TAIR"/>
</dbReference>
<dbReference type="GO" id="GO:0010218">
    <property type="term" value="P:response to far red light"/>
    <property type="evidence" value="ECO:0000316"/>
    <property type="project" value="TAIR"/>
</dbReference>
<dbReference type="GO" id="GO:0009416">
    <property type="term" value="P:response to light stimulus"/>
    <property type="evidence" value="ECO:0000315"/>
    <property type="project" value="TAIR"/>
</dbReference>
<dbReference type="GO" id="GO:0010114">
    <property type="term" value="P:response to red light"/>
    <property type="evidence" value="ECO:0000316"/>
    <property type="project" value="TAIR"/>
</dbReference>
<dbReference type="GO" id="GO:0009826">
    <property type="term" value="P:unidimensional cell growth"/>
    <property type="evidence" value="ECO:0000315"/>
    <property type="project" value="TAIR"/>
</dbReference>
<dbReference type="InterPro" id="IPR040222">
    <property type="entry name" value="ALOG"/>
</dbReference>
<dbReference type="InterPro" id="IPR006936">
    <property type="entry name" value="ALOG_dom"/>
</dbReference>
<dbReference type="PANTHER" id="PTHR31165">
    <property type="entry name" value="PROTEIN G1-LIKE2"/>
    <property type="match status" value="1"/>
</dbReference>
<dbReference type="PANTHER" id="PTHR31165:SF70">
    <property type="entry name" value="PROTEIN LIGHT-DEPENDENT SHORT HYPOCOTYLS 1"/>
    <property type="match status" value="1"/>
</dbReference>
<dbReference type="Pfam" id="PF04852">
    <property type="entry name" value="ALOG_dom"/>
    <property type="match status" value="1"/>
</dbReference>
<dbReference type="PROSITE" id="PS51697">
    <property type="entry name" value="ALOG"/>
    <property type="match status" value="1"/>
</dbReference>
<sequence length="190" mass="21653">MDLISHQPNKNPNSSTQLTPPSSSRYENQKRRDWNTFCQYLRNHRPPLSLPSCSGAHVLEFLRYLDQFGKTKVHHQNCAFFGLPNPPAPCPCPLRQAWGSLDALIGRLRAAYEENGGPPEANPFGSRAVRLFLREVRDFQAKARGVSYEKKRKRVNRQKPQTQPPLQLQQQQQQPQQGQSMMANYSGATV</sequence>
<organism>
    <name type="scientific">Arabidopsis thaliana</name>
    <name type="common">Mouse-ear cress</name>
    <dbReference type="NCBI Taxonomy" id="3702"/>
    <lineage>
        <taxon>Eukaryota</taxon>
        <taxon>Viridiplantae</taxon>
        <taxon>Streptophyta</taxon>
        <taxon>Embryophyta</taxon>
        <taxon>Tracheophyta</taxon>
        <taxon>Spermatophyta</taxon>
        <taxon>Magnoliopsida</taxon>
        <taxon>eudicotyledons</taxon>
        <taxon>Gunneridae</taxon>
        <taxon>Pentapetalae</taxon>
        <taxon>rosids</taxon>
        <taxon>malvids</taxon>
        <taxon>Brassicales</taxon>
        <taxon>Brassicaceae</taxon>
        <taxon>Camelineae</taxon>
        <taxon>Arabidopsis</taxon>
    </lineage>
</organism>
<gene>
    <name type="primary">LSH1</name>
    <name type="synonym">OBO2</name>
    <name type="ordered locus">At5g28490</name>
    <name type="ORF">F24J2.30</name>
</gene>
<protein>
    <recommendedName>
        <fullName>Protein LIGHT-DEPENDENT SHORT HYPOCOTYLS 1</fullName>
    </recommendedName>
    <alternativeName>
        <fullName>Protein ORGAN BOUNDARY 2</fullName>
    </alternativeName>
</protein>
<accession>Q6NNI3</accession>
<feature type="chain" id="PRO_0000425288" description="Protein LIGHT-DEPENDENT SHORT HYPOCOTYLS 1">
    <location>
        <begin position="1"/>
        <end position="190"/>
    </location>
</feature>
<feature type="domain" description="ALOG" evidence="1">
    <location>
        <begin position="25"/>
        <end position="152"/>
    </location>
</feature>
<feature type="region of interest" description="Disordered" evidence="2">
    <location>
        <begin position="1"/>
        <end position="28"/>
    </location>
</feature>
<feature type="region of interest" description="Disordered" evidence="2">
    <location>
        <begin position="145"/>
        <end position="190"/>
    </location>
</feature>
<feature type="short sequence motif" description="Nuclear localization signal" evidence="4">
    <location>
        <begin position="150"/>
        <end position="154"/>
    </location>
</feature>
<feature type="compositionally biased region" description="Polar residues" evidence="2">
    <location>
        <begin position="1"/>
        <end position="26"/>
    </location>
</feature>
<feature type="compositionally biased region" description="Low complexity" evidence="2">
    <location>
        <begin position="158"/>
        <end position="179"/>
    </location>
</feature>
<feature type="compositionally biased region" description="Polar residues" evidence="2">
    <location>
        <begin position="180"/>
        <end position="190"/>
    </location>
</feature>
<name>LSH1_ARATH</name>
<reference key="1">
    <citation type="journal article" date="2004" name="Plant J.">
        <title>Overexpression of LSH1, a member of an uncharacterised gene family, causes enhanced light regulation of seedling development.</title>
        <authorList>
            <person name="Zhao L."/>
            <person name="Nakazawa M."/>
            <person name="Takase T."/>
            <person name="Manabe K."/>
            <person name="Kobayashi M."/>
            <person name="Seki M."/>
            <person name="Shinozaki K."/>
            <person name="Matsui M."/>
        </authorList>
    </citation>
    <scope>NUCLEOTIDE SEQUENCE [MRNA]</scope>
    <scope>FUNCTION</scope>
    <scope>SUBCELLULAR LOCATION</scope>
    <scope>TISSUE SPECIFICITY</scope>
    <scope>GENE FAMILY</scope>
    <scope>NOMENCLATURE</scope>
    <source>
        <strain>cv. Columbia</strain>
    </source>
</reference>
<reference key="2">
    <citation type="journal article" date="2000" name="Nature">
        <title>Sequence and analysis of chromosome 5 of the plant Arabidopsis thaliana.</title>
        <authorList>
            <person name="Tabata S."/>
            <person name="Kaneko T."/>
            <person name="Nakamura Y."/>
            <person name="Kotani H."/>
            <person name="Kato T."/>
            <person name="Asamizu E."/>
            <person name="Miyajima N."/>
            <person name="Sasamoto S."/>
            <person name="Kimura T."/>
            <person name="Hosouchi T."/>
            <person name="Kawashima K."/>
            <person name="Kohara M."/>
            <person name="Matsumoto M."/>
            <person name="Matsuno A."/>
            <person name="Muraki A."/>
            <person name="Nakayama S."/>
            <person name="Nakazaki N."/>
            <person name="Naruo K."/>
            <person name="Okumura S."/>
            <person name="Shinpo S."/>
            <person name="Takeuchi C."/>
            <person name="Wada T."/>
            <person name="Watanabe A."/>
            <person name="Yamada M."/>
            <person name="Yasuda M."/>
            <person name="Sato S."/>
            <person name="de la Bastide M."/>
            <person name="Huang E."/>
            <person name="Spiegel L."/>
            <person name="Gnoj L."/>
            <person name="O'Shaughnessy A."/>
            <person name="Preston R."/>
            <person name="Habermann K."/>
            <person name="Murray J."/>
            <person name="Johnson D."/>
            <person name="Rohlfing T."/>
            <person name="Nelson J."/>
            <person name="Stoneking T."/>
            <person name="Pepin K."/>
            <person name="Spieth J."/>
            <person name="Sekhon M."/>
            <person name="Armstrong J."/>
            <person name="Becker M."/>
            <person name="Belter E."/>
            <person name="Cordum H."/>
            <person name="Cordes M."/>
            <person name="Courtney L."/>
            <person name="Courtney W."/>
            <person name="Dante M."/>
            <person name="Du H."/>
            <person name="Edwards J."/>
            <person name="Fryman J."/>
            <person name="Haakensen B."/>
            <person name="Lamar E."/>
            <person name="Latreille P."/>
            <person name="Leonard S."/>
            <person name="Meyer R."/>
            <person name="Mulvaney E."/>
            <person name="Ozersky P."/>
            <person name="Riley A."/>
            <person name="Strowmatt C."/>
            <person name="Wagner-McPherson C."/>
            <person name="Wollam A."/>
            <person name="Yoakum M."/>
            <person name="Bell M."/>
            <person name="Dedhia N."/>
            <person name="Parnell L."/>
            <person name="Shah R."/>
            <person name="Rodriguez M."/>
            <person name="Hoon See L."/>
            <person name="Vil D."/>
            <person name="Baker J."/>
            <person name="Kirchoff K."/>
            <person name="Toth K."/>
            <person name="King L."/>
            <person name="Bahret A."/>
            <person name="Miller B."/>
            <person name="Marra M.A."/>
            <person name="Martienssen R."/>
            <person name="McCombie W.R."/>
            <person name="Wilson R.K."/>
            <person name="Murphy G."/>
            <person name="Bancroft I."/>
            <person name="Volckaert G."/>
            <person name="Wambutt R."/>
            <person name="Duesterhoeft A."/>
            <person name="Stiekema W."/>
            <person name="Pohl T."/>
            <person name="Entian K.-D."/>
            <person name="Terryn N."/>
            <person name="Hartley N."/>
            <person name="Bent E."/>
            <person name="Johnson S."/>
            <person name="Langham S.-A."/>
            <person name="McCullagh B."/>
            <person name="Robben J."/>
            <person name="Grymonprez B."/>
            <person name="Zimmermann W."/>
            <person name="Ramsperger U."/>
            <person name="Wedler H."/>
            <person name="Balke K."/>
            <person name="Wedler E."/>
            <person name="Peters S."/>
            <person name="van Staveren M."/>
            <person name="Dirkse W."/>
            <person name="Mooijman P."/>
            <person name="Klein Lankhorst R."/>
            <person name="Weitzenegger T."/>
            <person name="Bothe G."/>
            <person name="Rose M."/>
            <person name="Hauf J."/>
            <person name="Berneiser S."/>
            <person name="Hempel S."/>
            <person name="Feldpausch M."/>
            <person name="Lamberth S."/>
            <person name="Villarroel R."/>
            <person name="Gielen J."/>
            <person name="Ardiles W."/>
            <person name="Bents O."/>
            <person name="Lemcke K."/>
            <person name="Kolesov G."/>
            <person name="Mayer K.F.X."/>
            <person name="Rudd S."/>
            <person name="Schoof H."/>
            <person name="Schueller C."/>
            <person name="Zaccaria P."/>
            <person name="Mewes H.-W."/>
            <person name="Bevan M."/>
            <person name="Fransz P.F."/>
        </authorList>
    </citation>
    <scope>NUCLEOTIDE SEQUENCE [LARGE SCALE GENOMIC DNA]</scope>
    <source>
        <strain>cv. Columbia</strain>
    </source>
</reference>
<reference key="3">
    <citation type="journal article" date="2017" name="Plant J.">
        <title>Araport11: a complete reannotation of the Arabidopsis thaliana reference genome.</title>
        <authorList>
            <person name="Cheng C.Y."/>
            <person name="Krishnakumar V."/>
            <person name="Chan A.P."/>
            <person name="Thibaud-Nissen F."/>
            <person name="Schobel S."/>
            <person name="Town C.D."/>
        </authorList>
    </citation>
    <scope>GENOME REANNOTATION</scope>
    <source>
        <strain>cv. Columbia</strain>
    </source>
</reference>
<reference key="4">
    <citation type="submission" date="2003-11" db="EMBL/GenBank/DDBJ databases">
        <title>Arabidopsis cDNA clones.</title>
        <authorList>
            <person name="Cheuk R.F."/>
            <person name="Chen H."/>
            <person name="Kim C.J."/>
            <person name="Shinn P."/>
            <person name="Ecker J.R."/>
        </authorList>
    </citation>
    <scope>NUCLEOTIDE SEQUENCE [LARGE SCALE MRNA]</scope>
    <source>
        <strain>cv. Columbia</strain>
    </source>
</reference>
<reference key="5">
    <citation type="journal article" date="2011" name="Proc. Natl. Acad. Sci. U.S.A.">
        <title>Organ boundary1 defines a gene expressed at the junction between the shoot apical meristem and lateral organs.</title>
        <authorList>
            <person name="Cho E."/>
            <person name="Zambryski P.C."/>
        </authorList>
    </citation>
    <scope>GENE FAMILY</scope>
</reference>
<reference key="6">
    <citation type="journal article" date="2012" name="Biol. Direct">
        <title>ALOG domains: provenance of plant homeotic and developmental regulators from the DNA-binding domain of a novel class of DIRS1-type retroposons.</title>
        <authorList>
            <person name="Iyer L.M."/>
            <person name="Aravind L."/>
        </authorList>
    </citation>
    <scope>DNA-BINDING</scope>
    <scope>GENE FAMILY</scope>
</reference>
<evidence type="ECO:0000255" key="1">
    <source>
        <dbReference type="PROSITE-ProRule" id="PRU01033"/>
    </source>
</evidence>
<evidence type="ECO:0000256" key="2">
    <source>
        <dbReference type="SAM" id="MobiDB-lite"/>
    </source>
</evidence>
<evidence type="ECO:0000269" key="3">
    <source>
    </source>
</evidence>
<evidence type="ECO:0000305" key="4"/>
<keyword id="KW-0217">Developmental protein</keyword>
<keyword id="KW-0238">DNA-binding</keyword>
<keyword id="KW-0539">Nucleus</keyword>
<keyword id="KW-1185">Reference proteome</keyword>
<keyword id="KW-0804">Transcription</keyword>
<keyword id="KW-0805">Transcription regulation</keyword>